<comment type="function">
    <text evidence="1 3">Regulates localization of phosphatidylinositol 4-kinase (PI4K) to the plasma membrane, possibly by reducing the association of TTC7 (TTC7A or TTC7B) with the PI4K complex (PubMed:25608530). Acts as a regulator of phosphatidylinositol 4-phosphate (PtdIns(4)P) synthesis (PubMed:25608530). May also play a role in fasting-induced catabolism (By similarity).</text>
</comment>
<comment type="subunit">
    <text evidence="3">Interacts (via C-terminal cytoplasmic tail) with PI4KA.</text>
</comment>
<comment type="interaction">
    <interactant intactId="EBI-2799342">
        <id>Q86TG1</id>
    </interactant>
    <interactant intactId="EBI-10173507">
        <id>Q6UY14-3</id>
        <label>ADAMTSL4</label>
    </interactant>
    <organismsDiffer>false</organismsDiffer>
    <experiments>3</experiments>
</comment>
<comment type="interaction">
    <interactant intactId="EBI-2799342">
        <id>Q86TG1</id>
    </interactant>
    <interactant intactId="EBI-10171774">
        <id>P60410</id>
        <label>KRTAP10-8</label>
    </interactant>
    <organismsDiffer>false</organismsDiffer>
    <experiments>3</experiments>
</comment>
<comment type="interaction">
    <interactant intactId="EBI-2799342">
        <id>Q86TG1</id>
    </interactant>
    <interactant intactId="EBI-945833">
        <id>Q7Z3S9</id>
        <label>NOTCH2NLA</label>
    </interactant>
    <organismsDiffer>false</organismsDiffer>
    <experiments>3</experiments>
</comment>
<comment type="interaction">
    <interactant intactId="EBI-2799342">
        <id>Q86TG1</id>
    </interactant>
    <interactant intactId="EBI-22310682">
        <id>P0DPK4</id>
        <label>NOTCH2NLC</label>
    </interactant>
    <organismsDiffer>false</organismsDiffer>
    <experiments>3</experiments>
</comment>
<comment type="interaction">
    <interactant intactId="EBI-2799342">
        <id>Q86TG1</id>
    </interactant>
    <interactant intactId="EBI-5235829">
        <id>Q8IWZ5</id>
        <label>TRIM42</label>
    </interactant>
    <organismsDiffer>false</organismsDiffer>
    <experiments>3</experiments>
</comment>
<comment type="subcellular location">
    <subcellularLocation>
        <location evidence="3">Cell membrane</location>
        <topology evidence="3">Multi-pass membrane protein</topology>
    </subcellularLocation>
    <text evidence="3">Localizes mainly at the plasma membrane; only a minor fraction localizes on intracellular structures (PubMed:25608530).</text>
</comment>
<comment type="alternative products">
    <event type="alternative splicing"/>
    <isoform>
        <id>Q86TG1-1</id>
        <name>1</name>
        <sequence type="displayed"/>
    </isoform>
    <isoform>
        <id>Q86TG1-2</id>
        <name>2</name>
        <sequence type="described" ref="VSP_022874 VSP_022875"/>
    </isoform>
</comment>
<comment type="similarity">
    <text evidence="5">Belongs to the DRAM/TMEM150 family.</text>
</comment>
<reference key="1">
    <citation type="journal article" date="2004" name="Nat. Genet.">
        <title>Complete sequencing and characterization of 21,243 full-length human cDNAs.</title>
        <authorList>
            <person name="Ota T."/>
            <person name="Suzuki Y."/>
            <person name="Nishikawa T."/>
            <person name="Otsuki T."/>
            <person name="Sugiyama T."/>
            <person name="Irie R."/>
            <person name="Wakamatsu A."/>
            <person name="Hayashi K."/>
            <person name="Sato H."/>
            <person name="Nagai K."/>
            <person name="Kimura K."/>
            <person name="Makita H."/>
            <person name="Sekine M."/>
            <person name="Obayashi M."/>
            <person name="Nishi T."/>
            <person name="Shibahara T."/>
            <person name="Tanaka T."/>
            <person name="Ishii S."/>
            <person name="Yamamoto J."/>
            <person name="Saito K."/>
            <person name="Kawai Y."/>
            <person name="Isono Y."/>
            <person name="Nakamura Y."/>
            <person name="Nagahari K."/>
            <person name="Murakami K."/>
            <person name="Yasuda T."/>
            <person name="Iwayanagi T."/>
            <person name="Wagatsuma M."/>
            <person name="Shiratori A."/>
            <person name="Sudo H."/>
            <person name="Hosoiri T."/>
            <person name="Kaku Y."/>
            <person name="Kodaira H."/>
            <person name="Kondo H."/>
            <person name="Sugawara M."/>
            <person name="Takahashi M."/>
            <person name="Kanda K."/>
            <person name="Yokoi T."/>
            <person name="Furuya T."/>
            <person name="Kikkawa E."/>
            <person name="Omura Y."/>
            <person name="Abe K."/>
            <person name="Kamihara K."/>
            <person name="Katsuta N."/>
            <person name="Sato K."/>
            <person name="Tanikawa M."/>
            <person name="Yamazaki M."/>
            <person name="Ninomiya K."/>
            <person name="Ishibashi T."/>
            <person name="Yamashita H."/>
            <person name="Murakawa K."/>
            <person name="Fujimori K."/>
            <person name="Tanai H."/>
            <person name="Kimata M."/>
            <person name="Watanabe M."/>
            <person name="Hiraoka S."/>
            <person name="Chiba Y."/>
            <person name="Ishida S."/>
            <person name="Ono Y."/>
            <person name="Takiguchi S."/>
            <person name="Watanabe S."/>
            <person name="Yosida M."/>
            <person name="Hotuta T."/>
            <person name="Kusano J."/>
            <person name="Kanehori K."/>
            <person name="Takahashi-Fujii A."/>
            <person name="Hara H."/>
            <person name="Tanase T.-O."/>
            <person name="Nomura Y."/>
            <person name="Togiya S."/>
            <person name="Komai F."/>
            <person name="Hara R."/>
            <person name="Takeuchi K."/>
            <person name="Arita M."/>
            <person name="Imose N."/>
            <person name="Musashino K."/>
            <person name="Yuuki H."/>
            <person name="Oshima A."/>
            <person name="Sasaki N."/>
            <person name="Aotsuka S."/>
            <person name="Yoshikawa Y."/>
            <person name="Matsunawa H."/>
            <person name="Ichihara T."/>
            <person name="Shiohata N."/>
            <person name="Sano S."/>
            <person name="Moriya S."/>
            <person name="Momiyama H."/>
            <person name="Satoh N."/>
            <person name="Takami S."/>
            <person name="Terashima Y."/>
            <person name="Suzuki O."/>
            <person name="Nakagawa S."/>
            <person name="Senoh A."/>
            <person name="Mizoguchi H."/>
            <person name="Goto Y."/>
            <person name="Shimizu F."/>
            <person name="Wakebe H."/>
            <person name="Hishigaki H."/>
            <person name="Watanabe T."/>
            <person name="Sugiyama A."/>
            <person name="Takemoto M."/>
            <person name="Kawakami B."/>
            <person name="Yamazaki M."/>
            <person name="Watanabe K."/>
            <person name="Kumagai A."/>
            <person name="Itakura S."/>
            <person name="Fukuzumi Y."/>
            <person name="Fujimori Y."/>
            <person name="Komiyama M."/>
            <person name="Tashiro H."/>
            <person name="Tanigami A."/>
            <person name="Fujiwara T."/>
            <person name="Ono T."/>
            <person name="Yamada K."/>
            <person name="Fujii Y."/>
            <person name="Ozaki K."/>
            <person name="Hirao M."/>
            <person name="Ohmori Y."/>
            <person name="Kawabata A."/>
            <person name="Hikiji T."/>
            <person name="Kobatake N."/>
            <person name="Inagaki H."/>
            <person name="Ikema Y."/>
            <person name="Okamoto S."/>
            <person name="Okitani R."/>
            <person name="Kawakami T."/>
            <person name="Noguchi S."/>
            <person name="Itoh T."/>
            <person name="Shigeta K."/>
            <person name="Senba T."/>
            <person name="Matsumura K."/>
            <person name="Nakajima Y."/>
            <person name="Mizuno T."/>
            <person name="Morinaga M."/>
            <person name="Sasaki M."/>
            <person name="Togashi T."/>
            <person name="Oyama M."/>
            <person name="Hata H."/>
            <person name="Watanabe M."/>
            <person name="Komatsu T."/>
            <person name="Mizushima-Sugano J."/>
            <person name="Satoh T."/>
            <person name="Shirai Y."/>
            <person name="Takahashi Y."/>
            <person name="Nakagawa K."/>
            <person name="Okumura K."/>
            <person name="Nagase T."/>
            <person name="Nomura N."/>
            <person name="Kikuchi H."/>
            <person name="Masuho Y."/>
            <person name="Yamashita R."/>
            <person name="Nakai K."/>
            <person name="Yada T."/>
            <person name="Nakamura Y."/>
            <person name="Ohara O."/>
            <person name="Isogai T."/>
            <person name="Sugano S."/>
        </authorList>
    </citation>
    <scope>NUCLEOTIDE SEQUENCE [LARGE SCALE MRNA] (ISOFORMS 1 AND 2)</scope>
    <source>
        <tissue>Embryo</tissue>
        <tissue>Skeletal muscle</tissue>
    </source>
</reference>
<reference key="2">
    <citation type="journal article" date="2005" name="Nature">
        <title>Generation and annotation of the DNA sequences of human chromosomes 2 and 4.</title>
        <authorList>
            <person name="Hillier L.W."/>
            <person name="Graves T.A."/>
            <person name="Fulton R.S."/>
            <person name="Fulton L.A."/>
            <person name="Pepin K.H."/>
            <person name="Minx P."/>
            <person name="Wagner-McPherson C."/>
            <person name="Layman D."/>
            <person name="Wylie K."/>
            <person name="Sekhon M."/>
            <person name="Becker M.C."/>
            <person name="Fewell G.A."/>
            <person name="Delehaunty K.D."/>
            <person name="Miner T.L."/>
            <person name="Nash W.E."/>
            <person name="Kremitzki C."/>
            <person name="Oddy L."/>
            <person name="Du H."/>
            <person name="Sun H."/>
            <person name="Bradshaw-Cordum H."/>
            <person name="Ali J."/>
            <person name="Carter J."/>
            <person name="Cordes M."/>
            <person name="Harris A."/>
            <person name="Isak A."/>
            <person name="van Brunt A."/>
            <person name="Nguyen C."/>
            <person name="Du F."/>
            <person name="Courtney L."/>
            <person name="Kalicki J."/>
            <person name="Ozersky P."/>
            <person name="Abbott S."/>
            <person name="Armstrong J."/>
            <person name="Belter E.A."/>
            <person name="Caruso L."/>
            <person name="Cedroni M."/>
            <person name="Cotton M."/>
            <person name="Davidson T."/>
            <person name="Desai A."/>
            <person name="Elliott G."/>
            <person name="Erb T."/>
            <person name="Fronick C."/>
            <person name="Gaige T."/>
            <person name="Haakenson W."/>
            <person name="Haglund K."/>
            <person name="Holmes A."/>
            <person name="Harkins R."/>
            <person name="Kim K."/>
            <person name="Kruchowski S.S."/>
            <person name="Strong C.M."/>
            <person name="Grewal N."/>
            <person name="Goyea E."/>
            <person name="Hou S."/>
            <person name="Levy A."/>
            <person name="Martinka S."/>
            <person name="Mead K."/>
            <person name="McLellan M.D."/>
            <person name="Meyer R."/>
            <person name="Randall-Maher J."/>
            <person name="Tomlinson C."/>
            <person name="Dauphin-Kohlberg S."/>
            <person name="Kozlowicz-Reilly A."/>
            <person name="Shah N."/>
            <person name="Swearengen-Shahid S."/>
            <person name="Snider J."/>
            <person name="Strong J.T."/>
            <person name="Thompson J."/>
            <person name="Yoakum M."/>
            <person name="Leonard S."/>
            <person name="Pearman C."/>
            <person name="Trani L."/>
            <person name="Radionenko M."/>
            <person name="Waligorski J.E."/>
            <person name="Wang C."/>
            <person name="Rock S.M."/>
            <person name="Tin-Wollam A.-M."/>
            <person name="Maupin R."/>
            <person name="Latreille P."/>
            <person name="Wendl M.C."/>
            <person name="Yang S.-P."/>
            <person name="Pohl C."/>
            <person name="Wallis J.W."/>
            <person name="Spieth J."/>
            <person name="Bieri T.A."/>
            <person name="Berkowicz N."/>
            <person name="Nelson J.O."/>
            <person name="Osborne J."/>
            <person name="Ding L."/>
            <person name="Meyer R."/>
            <person name="Sabo A."/>
            <person name="Shotland Y."/>
            <person name="Sinha P."/>
            <person name="Wohldmann P.E."/>
            <person name="Cook L.L."/>
            <person name="Hickenbotham M.T."/>
            <person name="Eldred J."/>
            <person name="Williams D."/>
            <person name="Jones T.A."/>
            <person name="She X."/>
            <person name="Ciccarelli F.D."/>
            <person name="Izaurralde E."/>
            <person name="Taylor J."/>
            <person name="Schmutz J."/>
            <person name="Myers R.M."/>
            <person name="Cox D.R."/>
            <person name="Huang X."/>
            <person name="McPherson J.D."/>
            <person name="Mardis E.R."/>
            <person name="Clifton S.W."/>
            <person name="Warren W.C."/>
            <person name="Chinwalla A.T."/>
            <person name="Eddy S.R."/>
            <person name="Marra M.A."/>
            <person name="Ovcharenko I."/>
            <person name="Furey T.S."/>
            <person name="Miller W."/>
            <person name="Eichler E.E."/>
            <person name="Bork P."/>
            <person name="Suyama M."/>
            <person name="Torrents D."/>
            <person name="Waterston R.H."/>
            <person name="Wilson R.K."/>
        </authorList>
    </citation>
    <scope>NUCLEOTIDE SEQUENCE [LARGE SCALE GENOMIC DNA]</scope>
</reference>
<reference key="3">
    <citation type="submission" date="2005-09" db="EMBL/GenBank/DDBJ databases">
        <authorList>
            <person name="Mural R.J."/>
            <person name="Istrail S."/>
            <person name="Sutton G.G."/>
            <person name="Florea L."/>
            <person name="Halpern A.L."/>
            <person name="Mobarry C.M."/>
            <person name="Lippert R."/>
            <person name="Walenz B."/>
            <person name="Shatkay H."/>
            <person name="Dew I."/>
            <person name="Miller J.R."/>
            <person name="Flanigan M.J."/>
            <person name="Edwards N.J."/>
            <person name="Bolanos R."/>
            <person name="Fasulo D."/>
            <person name="Halldorsson B.V."/>
            <person name="Hannenhalli S."/>
            <person name="Turner R."/>
            <person name="Yooseph S."/>
            <person name="Lu F."/>
            <person name="Nusskern D.R."/>
            <person name="Shue B.C."/>
            <person name="Zheng X.H."/>
            <person name="Zhong F."/>
            <person name="Delcher A.L."/>
            <person name="Huson D.H."/>
            <person name="Kravitz S.A."/>
            <person name="Mouchard L."/>
            <person name="Reinert K."/>
            <person name="Remington K.A."/>
            <person name="Clark A.G."/>
            <person name="Waterman M.S."/>
            <person name="Eichler E.E."/>
            <person name="Adams M.D."/>
            <person name="Hunkapiller M.W."/>
            <person name="Myers E.W."/>
            <person name="Venter J.C."/>
        </authorList>
    </citation>
    <scope>NUCLEOTIDE SEQUENCE [LARGE SCALE GENOMIC DNA]</scope>
</reference>
<reference key="4">
    <citation type="journal article" date="2004" name="Genome Res.">
        <title>The status, quality, and expansion of the NIH full-length cDNA project: the Mammalian Gene Collection (MGC).</title>
        <authorList>
            <consortium name="The MGC Project Team"/>
        </authorList>
    </citation>
    <scope>NUCLEOTIDE SEQUENCE [LARGE SCALE MRNA]</scope>
    <source>
        <tissue>PNS</tissue>
    </source>
</reference>
<reference key="5">
    <citation type="journal article" date="2015" name="EMBO Rep.">
        <title>Plasticity of PI4KIIIalpha interactions at the plasma membrane.</title>
        <authorList>
            <person name="Chung J."/>
            <person name="Nakatsu F."/>
            <person name="Baskin J.M."/>
            <person name="De Camilli P."/>
        </authorList>
    </citation>
    <scope>FUNCTION</scope>
    <scope>SUBCELLULAR LOCATION</scope>
    <scope>TOPOLOGY</scope>
    <scope>INTERACTION WITH PI4KA</scope>
</reference>
<evidence type="ECO:0000250" key="1">
    <source>
        <dbReference type="UniProtKB" id="Q9QZE9"/>
    </source>
</evidence>
<evidence type="ECO:0000255" key="2"/>
<evidence type="ECO:0000269" key="3">
    <source>
    </source>
</evidence>
<evidence type="ECO:0000303" key="4">
    <source>
    </source>
</evidence>
<evidence type="ECO:0000305" key="5"/>
<evidence type="ECO:0000305" key="6">
    <source>
    </source>
</evidence>
<name>T150A_HUMAN</name>
<protein>
    <recommendedName>
        <fullName>Transmembrane protein 150A</fullName>
    </recommendedName>
    <alternativeName>
        <fullName>Transmembrane protein 150</fullName>
    </alternativeName>
</protein>
<keyword id="KW-0025">Alternative splicing</keyword>
<keyword id="KW-1003">Cell membrane</keyword>
<keyword id="KW-0325">Glycoprotein</keyword>
<keyword id="KW-0472">Membrane</keyword>
<keyword id="KW-1267">Proteomics identification</keyword>
<keyword id="KW-1185">Reference proteome</keyword>
<keyword id="KW-0812">Transmembrane</keyword>
<keyword id="KW-1133">Transmembrane helix</keyword>
<sequence>MTAWILLPVSLSAFSITGIWTVYAMAVMNHHVCPVENWSYNESCPPDPAEQGGPKTCCTLDDVPLISKCGSYPPESCLFSLIGNMGAFMVALICLLRYGQLLEQSRHSWVNTTALITGCTNAAGLLVVGNFQVDHARSLHYVGAGVAFPAGLLFVCLHCALSYQGATAPLDLAVAYLRSVLAVIAFITLVLSGVFFVHESSQLQHGAALCEWVCVIDILIFYGTFSYEFGAVSSDTLVAALQPTPGRACKSSGSSSTSTHLNCAPESIAMI</sequence>
<accession>Q86TG1</accession>
<accession>A8K764</accession>
<accession>B7WPQ9</accession>
<accession>D6W5L2</accession>
<accession>Q8N2R6</accession>
<feature type="chain" id="PRO_0000274775" description="Transmembrane protein 150A">
    <location>
        <begin position="1"/>
        <end position="271"/>
    </location>
</feature>
<feature type="topological domain" description="Cytoplasmic" evidence="5">
    <location>
        <begin position="1"/>
        <end position="2"/>
    </location>
</feature>
<feature type="transmembrane region" description="Helical" evidence="2">
    <location>
        <begin position="3"/>
        <end position="23"/>
    </location>
</feature>
<feature type="topological domain" description="Extracellular" evidence="5">
    <location>
        <begin position="24"/>
        <end position="75"/>
    </location>
</feature>
<feature type="transmembrane region" description="Helical" evidence="2">
    <location>
        <begin position="76"/>
        <end position="96"/>
    </location>
</feature>
<feature type="topological domain" description="Cytoplasmic" evidence="5">
    <location>
        <begin position="97"/>
        <end position="108"/>
    </location>
</feature>
<feature type="transmembrane region" description="Helical" evidence="2">
    <location>
        <begin position="109"/>
        <end position="129"/>
    </location>
</feature>
<feature type="topological domain" description="Extracellular" evidence="5">
    <location>
        <begin position="130"/>
        <end position="140"/>
    </location>
</feature>
<feature type="transmembrane region" description="Helical" evidence="2">
    <location>
        <begin position="141"/>
        <end position="161"/>
    </location>
</feature>
<feature type="topological domain" description="Cytoplasmic" evidence="5">
    <location>
        <begin position="162"/>
        <end position="178"/>
    </location>
</feature>
<feature type="transmembrane region" description="Helical" evidence="2">
    <location>
        <begin position="179"/>
        <end position="199"/>
    </location>
</feature>
<feature type="topological domain" description="Extracellular" evidence="5">
    <location>
        <begin position="200"/>
        <end position="211"/>
    </location>
</feature>
<feature type="transmembrane region" description="Helical" evidence="2">
    <location>
        <begin position="212"/>
        <end position="232"/>
    </location>
</feature>
<feature type="topological domain" description="Cytoplasmic" evidence="6">
    <location>
        <begin position="233"/>
        <end position="271"/>
    </location>
</feature>
<feature type="glycosylation site" description="N-linked (GlcNAc...) asparagine" evidence="2">
    <location>
        <position position="37"/>
    </location>
</feature>
<feature type="glycosylation site" description="N-linked (GlcNAc...) asparagine" evidence="2">
    <location>
        <position position="41"/>
    </location>
</feature>
<feature type="splice variant" id="VSP_022874" description="In isoform 2." evidence="4">
    <location>
        <begin position="1"/>
        <end position="60"/>
    </location>
</feature>
<feature type="splice variant" id="VSP_022875" description="In isoform 2." evidence="4">
    <original>DDVPLISKCGSYPPESCLFSLIGNMGAFM</original>
    <variation>MYALWRTGPTTSPALLTLLSKGVPRPAAPWTMSPSS</variation>
    <location>
        <begin position="61"/>
        <end position="89"/>
    </location>
</feature>
<feature type="sequence conflict" description="In Ref. 1; BAC11029." evidence="5" ref="1">
    <original>L</original>
    <variation>P</variation>
    <location>
        <position position="219"/>
    </location>
</feature>
<gene>
    <name type="primary">TMEM150A</name>
    <name type="synonym">TMEM150</name>
</gene>
<organism>
    <name type="scientific">Homo sapiens</name>
    <name type="common">Human</name>
    <dbReference type="NCBI Taxonomy" id="9606"/>
    <lineage>
        <taxon>Eukaryota</taxon>
        <taxon>Metazoa</taxon>
        <taxon>Chordata</taxon>
        <taxon>Craniata</taxon>
        <taxon>Vertebrata</taxon>
        <taxon>Euteleostomi</taxon>
        <taxon>Mammalia</taxon>
        <taxon>Eutheria</taxon>
        <taxon>Euarchontoglires</taxon>
        <taxon>Primates</taxon>
        <taxon>Haplorrhini</taxon>
        <taxon>Catarrhini</taxon>
        <taxon>Hominidae</taxon>
        <taxon>Homo</taxon>
    </lineage>
</organism>
<dbReference type="EMBL" id="AK074505">
    <property type="protein sequence ID" value="BAC11029.1"/>
    <property type="molecule type" value="mRNA"/>
</dbReference>
<dbReference type="EMBL" id="AK291879">
    <property type="protein sequence ID" value="BAF84568.1"/>
    <property type="molecule type" value="mRNA"/>
</dbReference>
<dbReference type="EMBL" id="AC016753">
    <property type="protein sequence ID" value="AAY24344.1"/>
    <property type="molecule type" value="Genomic_DNA"/>
</dbReference>
<dbReference type="EMBL" id="CH471053">
    <property type="protein sequence ID" value="EAW99503.1"/>
    <property type="molecule type" value="Genomic_DNA"/>
</dbReference>
<dbReference type="EMBL" id="CH471053">
    <property type="protein sequence ID" value="EAW99499.1"/>
    <property type="molecule type" value="Genomic_DNA"/>
</dbReference>
<dbReference type="EMBL" id="CH471053">
    <property type="protein sequence ID" value="EAW99500.1"/>
    <property type="molecule type" value="Genomic_DNA"/>
</dbReference>
<dbReference type="EMBL" id="BC050466">
    <property type="protein sequence ID" value="AAH50466.1"/>
    <property type="molecule type" value="mRNA"/>
</dbReference>
<dbReference type="CCDS" id="CCDS1982.1">
    <molecule id="Q86TG1-2"/>
</dbReference>
<dbReference type="CCDS" id="CCDS33233.1">
    <molecule id="Q86TG1-1"/>
</dbReference>
<dbReference type="RefSeq" id="NP_001026908.1">
    <molecule id="Q86TG1-1"/>
    <property type="nucleotide sequence ID" value="NM_001031738.3"/>
</dbReference>
<dbReference type="RefSeq" id="NP_001356846.1">
    <molecule id="Q86TG1-1"/>
    <property type="nucleotide sequence ID" value="NM_001369917.1"/>
</dbReference>
<dbReference type="RefSeq" id="NP_699173.2">
    <molecule id="Q86TG1-2"/>
    <property type="nucleotide sequence ID" value="NM_153342.4"/>
</dbReference>
<dbReference type="RefSeq" id="XP_006711993.1">
    <molecule id="Q86TG1-1"/>
    <property type="nucleotide sequence ID" value="XM_006711930.4"/>
</dbReference>
<dbReference type="RefSeq" id="XP_006711994.1">
    <molecule id="Q86TG1-1"/>
    <property type="nucleotide sequence ID" value="XM_006711931.4"/>
</dbReference>
<dbReference type="RefSeq" id="XP_006711995.1">
    <property type="nucleotide sequence ID" value="XM_006711932.2"/>
</dbReference>
<dbReference type="RefSeq" id="XP_011530810.1">
    <molecule id="Q86TG1-2"/>
    <property type="nucleotide sequence ID" value="XM_011532508.3"/>
</dbReference>
<dbReference type="RefSeq" id="XP_047299214.1">
    <molecule id="Q86TG1-2"/>
    <property type="nucleotide sequence ID" value="XM_047443258.1"/>
</dbReference>
<dbReference type="RefSeq" id="XP_054196438.1">
    <molecule id="Q86TG1-1"/>
    <property type="nucleotide sequence ID" value="XM_054340463.1"/>
</dbReference>
<dbReference type="RefSeq" id="XP_054196439.1">
    <molecule id="Q86TG1-1"/>
    <property type="nucleotide sequence ID" value="XM_054340464.1"/>
</dbReference>
<dbReference type="RefSeq" id="XP_054196443.1">
    <molecule id="Q86TG1-2"/>
    <property type="nucleotide sequence ID" value="XM_054340468.1"/>
</dbReference>
<dbReference type="RefSeq" id="XP_054196444.1">
    <molecule id="Q86TG1-2"/>
    <property type="nucleotide sequence ID" value="XM_054340469.1"/>
</dbReference>
<dbReference type="BioGRID" id="126189">
    <property type="interactions" value="53"/>
</dbReference>
<dbReference type="FunCoup" id="Q86TG1">
    <property type="interactions" value="554"/>
</dbReference>
<dbReference type="IntAct" id="Q86TG1">
    <property type="interactions" value="47"/>
</dbReference>
<dbReference type="STRING" id="9606.ENSP00000387292"/>
<dbReference type="TCDB" id="8.A.113.1.2">
    <property type="family name" value="the tentonin or tmem150 (tmem150) family"/>
</dbReference>
<dbReference type="GlyCosmos" id="Q86TG1">
    <property type="glycosylation" value="2 sites, No reported glycans"/>
</dbReference>
<dbReference type="GlyGen" id="Q86TG1">
    <property type="glycosylation" value="3 sites"/>
</dbReference>
<dbReference type="iPTMnet" id="Q86TG1"/>
<dbReference type="PhosphoSitePlus" id="Q86TG1"/>
<dbReference type="BioMuta" id="TMEM150A"/>
<dbReference type="DMDM" id="74727425"/>
<dbReference type="MassIVE" id="Q86TG1"/>
<dbReference type="PaxDb" id="9606-ENSP00000387292"/>
<dbReference type="PeptideAtlas" id="Q86TG1"/>
<dbReference type="ProteomicsDB" id="69691">
    <molecule id="Q86TG1-1"/>
</dbReference>
<dbReference type="Antibodypedia" id="16968">
    <property type="antibodies" value="67 antibodies from 19 providers"/>
</dbReference>
<dbReference type="DNASU" id="129303"/>
<dbReference type="Ensembl" id="ENST00000306353.7">
    <molecule id="Q86TG1-2"/>
    <property type="protein sequence ID" value="ENSP00000302715.3"/>
    <property type="gene ID" value="ENSG00000168890.14"/>
</dbReference>
<dbReference type="Ensembl" id="ENST00000334462.10">
    <molecule id="Q86TG1-1"/>
    <property type="protein sequence ID" value="ENSP00000334708.5"/>
    <property type="gene ID" value="ENSG00000168890.14"/>
</dbReference>
<dbReference type="Ensembl" id="ENST00000409668.1">
    <molecule id="Q86TG1-1"/>
    <property type="protein sequence ID" value="ENSP00000387292.1"/>
    <property type="gene ID" value="ENSG00000168890.14"/>
</dbReference>
<dbReference type="GeneID" id="129303"/>
<dbReference type="KEGG" id="hsa:129303"/>
<dbReference type="MANE-Select" id="ENST00000334462.10">
    <property type="protein sequence ID" value="ENSP00000334708.5"/>
    <property type="RefSeq nucleotide sequence ID" value="NM_001031738.3"/>
    <property type="RefSeq protein sequence ID" value="NP_001026908.1"/>
</dbReference>
<dbReference type="UCSC" id="uc002spy.3">
    <molecule id="Q86TG1-1"/>
    <property type="organism name" value="human"/>
</dbReference>
<dbReference type="AGR" id="HGNC:24677"/>
<dbReference type="CTD" id="129303"/>
<dbReference type="DisGeNET" id="129303"/>
<dbReference type="GeneCards" id="TMEM150A"/>
<dbReference type="HGNC" id="HGNC:24677">
    <property type="gene designation" value="TMEM150A"/>
</dbReference>
<dbReference type="HPA" id="ENSG00000168890">
    <property type="expression patterns" value="Low tissue specificity"/>
</dbReference>
<dbReference type="MIM" id="616757">
    <property type="type" value="gene"/>
</dbReference>
<dbReference type="neXtProt" id="NX_Q86TG1"/>
<dbReference type="OpenTargets" id="ENSG00000168890"/>
<dbReference type="PharmGKB" id="PA165697532"/>
<dbReference type="VEuPathDB" id="HostDB:ENSG00000168890"/>
<dbReference type="eggNOG" id="KOG4320">
    <property type="taxonomic scope" value="Eukaryota"/>
</dbReference>
<dbReference type="GeneTree" id="ENSGT01030000234578"/>
<dbReference type="HOGENOM" id="CLU_1457738_0_0_1"/>
<dbReference type="InParanoid" id="Q86TG1"/>
<dbReference type="OMA" id="DPAKHGY"/>
<dbReference type="OrthoDB" id="9925752at2759"/>
<dbReference type="PAN-GO" id="Q86TG1">
    <property type="GO annotations" value="2 GO annotations based on evolutionary models"/>
</dbReference>
<dbReference type="PhylomeDB" id="Q86TG1"/>
<dbReference type="TreeFam" id="TF314508"/>
<dbReference type="PathwayCommons" id="Q86TG1"/>
<dbReference type="SignaLink" id="Q86TG1"/>
<dbReference type="BioGRID-ORCS" id="129303">
    <property type="hits" value="23 hits in 1161 CRISPR screens"/>
</dbReference>
<dbReference type="ChiTaRS" id="TMEM150A">
    <property type="organism name" value="human"/>
</dbReference>
<dbReference type="GeneWiki" id="TMEM150"/>
<dbReference type="GenomeRNAi" id="129303"/>
<dbReference type="Pharos" id="Q86TG1">
    <property type="development level" value="Tbio"/>
</dbReference>
<dbReference type="PRO" id="PR:Q86TG1"/>
<dbReference type="Proteomes" id="UP000005640">
    <property type="component" value="Chromosome 2"/>
</dbReference>
<dbReference type="RNAct" id="Q86TG1">
    <property type="molecule type" value="protein"/>
</dbReference>
<dbReference type="Bgee" id="ENSG00000168890">
    <property type="expression patterns" value="Expressed in body of pancreas and 166 other cell types or tissues"/>
</dbReference>
<dbReference type="ExpressionAtlas" id="Q86TG1">
    <property type="expression patterns" value="baseline and differential"/>
</dbReference>
<dbReference type="GO" id="GO:0005886">
    <property type="term" value="C:plasma membrane"/>
    <property type="evidence" value="ECO:0000314"/>
    <property type="project" value="UniProtKB"/>
</dbReference>
<dbReference type="GO" id="GO:0046854">
    <property type="term" value="P:phosphatidylinositol phosphate biosynthetic process"/>
    <property type="evidence" value="ECO:0000315"/>
    <property type="project" value="UniProtKB"/>
</dbReference>
<dbReference type="GO" id="GO:0072659">
    <property type="term" value="P:protein localization to plasma membrane"/>
    <property type="evidence" value="ECO:0000314"/>
    <property type="project" value="UniProtKB"/>
</dbReference>
<dbReference type="InterPro" id="IPR050911">
    <property type="entry name" value="DRAM/TMEM150_Autophagy_Mod"/>
</dbReference>
<dbReference type="InterPro" id="IPR019402">
    <property type="entry name" value="Frag1/DRAM/Sfk1"/>
</dbReference>
<dbReference type="PANTHER" id="PTHR21324">
    <property type="entry name" value="FASTING-INDUCIBLE INTEGRAL MEMBRANE PROTEIN TM6P1-RELATED"/>
    <property type="match status" value="1"/>
</dbReference>
<dbReference type="PANTHER" id="PTHR21324:SF6">
    <property type="entry name" value="TRANSMEMBRANE PROTEIN 150A"/>
    <property type="match status" value="1"/>
</dbReference>
<dbReference type="Pfam" id="PF10277">
    <property type="entry name" value="Frag1"/>
    <property type="match status" value="1"/>
</dbReference>
<proteinExistence type="evidence at protein level"/>